<comment type="function">
    <text evidence="1">Catalyzes the transfer of the GlcNAc-1-phosphate moiety from UDP-GlcNAc onto the carrier lipid undecaprenyl phosphate (C55-P), yielding GlcNAc-pyrophosphoryl-undecaprenyl (GlcNAc-PP-C55).</text>
</comment>
<comment type="catalytic activity">
    <reaction evidence="1">
        <text>di-trans,octa-cis-undecaprenyl phosphate + UDP-N-acetyl-alpha-D-glucosamine = N-acetyl-alpha-D-glucosaminyl-di-trans,octa-cis-undecaprenyl diphosphate + UMP</text>
        <dbReference type="Rhea" id="RHEA:28090"/>
        <dbReference type="ChEBI" id="CHEBI:57705"/>
        <dbReference type="ChEBI" id="CHEBI:57865"/>
        <dbReference type="ChEBI" id="CHEBI:60392"/>
        <dbReference type="ChEBI" id="CHEBI:62959"/>
        <dbReference type="EC" id="2.7.8.33"/>
    </reaction>
</comment>
<comment type="cofactor">
    <cofactor evidence="1">
        <name>Mg(2+)</name>
        <dbReference type="ChEBI" id="CHEBI:18420"/>
    </cofactor>
</comment>
<comment type="cofactor">
    <cofactor evidence="1">
        <name>Mn(2+)</name>
        <dbReference type="ChEBI" id="CHEBI:29035"/>
    </cofactor>
</comment>
<comment type="pathway">
    <text evidence="1">Bacterial outer membrane biogenesis; LPS O-antigen biosynthesis.</text>
</comment>
<comment type="pathway">
    <text evidence="1">Bacterial outer membrane biogenesis; enterobacterial common antigen biosynthesis.</text>
</comment>
<comment type="subcellular location">
    <subcellularLocation>
        <location evidence="1">Cell inner membrane</location>
        <topology evidence="1">Multi-pass membrane protein</topology>
    </subcellularLocation>
</comment>
<comment type="similarity">
    <text evidence="1">Belongs to the glycosyltransferase 4 family. WecA subfamily.</text>
</comment>
<keyword id="KW-0997">Cell inner membrane</keyword>
<keyword id="KW-1003">Cell membrane</keyword>
<keyword id="KW-0328">Glycosyltransferase</keyword>
<keyword id="KW-0448">Lipopolysaccharide biosynthesis</keyword>
<keyword id="KW-0460">Magnesium</keyword>
<keyword id="KW-0464">Manganese</keyword>
<keyword id="KW-0472">Membrane</keyword>
<keyword id="KW-0808">Transferase</keyword>
<keyword id="KW-0812">Transmembrane</keyword>
<keyword id="KW-1133">Transmembrane helix</keyword>
<dbReference type="EC" id="2.7.8.33" evidence="1"/>
<dbReference type="EMBL" id="AL513382">
    <property type="protein sequence ID" value="CAD09398.1"/>
    <property type="molecule type" value="Genomic_DNA"/>
</dbReference>
<dbReference type="EMBL" id="AE014613">
    <property type="protein sequence ID" value="AAO70903.1"/>
    <property type="molecule type" value="Genomic_DNA"/>
</dbReference>
<dbReference type="RefSeq" id="NP_457829.1">
    <property type="nucleotide sequence ID" value="NC_003198.1"/>
</dbReference>
<dbReference type="RefSeq" id="WP_000771938.1">
    <property type="nucleotide sequence ID" value="NZ_WSUR01000032.1"/>
</dbReference>
<dbReference type="SMR" id="Q8Z386"/>
<dbReference type="STRING" id="220341.gene:17587493"/>
<dbReference type="KEGG" id="stt:t3379"/>
<dbReference type="KEGG" id="sty:STY3637"/>
<dbReference type="PATRIC" id="fig|220341.7.peg.3706"/>
<dbReference type="eggNOG" id="COG0472">
    <property type="taxonomic scope" value="Bacteria"/>
</dbReference>
<dbReference type="HOGENOM" id="CLU_023982_1_0_6"/>
<dbReference type="OMA" id="MCLGFLP"/>
<dbReference type="OrthoDB" id="9783652at2"/>
<dbReference type="UniPathway" id="UPA00281"/>
<dbReference type="UniPathway" id="UPA00566"/>
<dbReference type="Proteomes" id="UP000000541">
    <property type="component" value="Chromosome"/>
</dbReference>
<dbReference type="Proteomes" id="UP000002670">
    <property type="component" value="Chromosome"/>
</dbReference>
<dbReference type="GO" id="GO:0009276">
    <property type="term" value="C:Gram-negative-bacterium-type cell wall"/>
    <property type="evidence" value="ECO:0000250"/>
    <property type="project" value="UniProtKB"/>
</dbReference>
<dbReference type="GO" id="GO:0005886">
    <property type="term" value="C:plasma membrane"/>
    <property type="evidence" value="ECO:0007669"/>
    <property type="project" value="UniProtKB-SubCell"/>
</dbReference>
<dbReference type="GO" id="GO:0016757">
    <property type="term" value="F:glycosyltransferase activity"/>
    <property type="evidence" value="ECO:0007669"/>
    <property type="project" value="UniProtKB-KW"/>
</dbReference>
<dbReference type="GO" id="GO:0000287">
    <property type="term" value="F:magnesium ion binding"/>
    <property type="evidence" value="ECO:0000250"/>
    <property type="project" value="UniProtKB"/>
</dbReference>
<dbReference type="GO" id="GO:0030145">
    <property type="term" value="F:manganese ion binding"/>
    <property type="evidence" value="ECO:0000250"/>
    <property type="project" value="UniProtKB"/>
</dbReference>
<dbReference type="GO" id="GO:0016780">
    <property type="term" value="F:phosphotransferase activity, for other substituted phosphate groups"/>
    <property type="evidence" value="ECO:0000250"/>
    <property type="project" value="UniProtKB"/>
</dbReference>
<dbReference type="GO" id="GO:0036380">
    <property type="term" value="F:UDP-N-acetylglucosamine-undecaprenyl-phosphate N-acetylglucosaminephosphotransferase activity"/>
    <property type="evidence" value="ECO:0007669"/>
    <property type="project" value="UniProtKB-UniRule"/>
</dbReference>
<dbReference type="GO" id="GO:0044038">
    <property type="term" value="P:cell wall macromolecule biosynthetic process"/>
    <property type="evidence" value="ECO:0000250"/>
    <property type="project" value="UniProtKB"/>
</dbReference>
<dbReference type="GO" id="GO:0071555">
    <property type="term" value="P:cell wall organization"/>
    <property type="evidence" value="ECO:0000250"/>
    <property type="project" value="UniProtKB"/>
</dbReference>
<dbReference type="GO" id="GO:0009246">
    <property type="term" value="P:enterobacterial common antigen biosynthetic process"/>
    <property type="evidence" value="ECO:0007669"/>
    <property type="project" value="UniProtKB-UniRule"/>
</dbReference>
<dbReference type="GO" id="GO:0009103">
    <property type="term" value="P:lipopolysaccharide biosynthetic process"/>
    <property type="evidence" value="ECO:0000250"/>
    <property type="project" value="UniProtKB"/>
</dbReference>
<dbReference type="GO" id="GO:0009243">
    <property type="term" value="P:O antigen biosynthetic process"/>
    <property type="evidence" value="ECO:0007669"/>
    <property type="project" value="UniProtKB-UniRule"/>
</dbReference>
<dbReference type="CDD" id="cd06853">
    <property type="entry name" value="GT_WecA_like"/>
    <property type="match status" value="1"/>
</dbReference>
<dbReference type="HAMAP" id="MF_02030">
    <property type="entry name" value="WecA_Gammaproteo"/>
    <property type="match status" value="1"/>
</dbReference>
<dbReference type="InterPro" id="IPR012750">
    <property type="entry name" value="ECA_WecA-rel"/>
</dbReference>
<dbReference type="InterPro" id="IPR000715">
    <property type="entry name" value="Glycosyl_transferase_4"/>
</dbReference>
<dbReference type="NCBIfam" id="TIGR02380">
    <property type="entry name" value="ECA_wecA"/>
    <property type="match status" value="1"/>
</dbReference>
<dbReference type="PANTHER" id="PTHR22926">
    <property type="entry name" value="PHOSPHO-N-ACETYLMURAMOYL-PENTAPEPTIDE-TRANSFERASE"/>
    <property type="match status" value="1"/>
</dbReference>
<dbReference type="PANTHER" id="PTHR22926:SF3">
    <property type="entry name" value="UNDECAPRENYL-PHOSPHATE ALPHA-N-ACETYLGLUCOSAMINYL 1-PHOSPHATE TRANSFERASE"/>
    <property type="match status" value="1"/>
</dbReference>
<dbReference type="Pfam" id="PF00953">
    <property type="entry name" value="Glycos_transf_4"/>
    <property type="match status" value="1"/>
</dbReference>
<sequence>MKLLTALSELISIFLFTTIFIFLARKVAIKIGLVDKPNFRKRHQGVIPLVGGISVFAGICFMFGLSDYYIPHLSLYLICAGVLVFVGAMDDRFDISVKIRAVVQAVIAVVMMVIAKLHLGSLGYIFGPWELVLGPFGYFLTLFAVWAAINAFNMVDGIDGLLGGLSSVSFAAMGLILWFDGQTSLAMWCFAMIAAILPYIMLNLGILGRRYKVFMGDAGSTLIGFTVIWLLLETTQGKTHSISPVTALWIIAIPLMDMVAIMYRRLRKGMSPFSPDRQHIHHLVMRAGFTSRQAFVLITLAAAILAGVGVTAEYSHFVPEWVMLVLFLLAFFLYGYCIKRAWKVARFIKRVKRRLRRQRKNRPNLTK</sequence>
<organism>
    <name type="scientific">Salmonella typhi</name>
    <dbReference type="NCBI Taxonomy" id="90370"/>
    <lineage>
        <taxon>Bacteria</taxon>
        <taxon>Pseudomonadati</taxon>
        <taxon>Pseudomonadota</taxon>
        <taxon>Gammaproteobacteria</taxon>
        <taxon>Enterobacterales</taxon>
        <taxon>Enterobacteriaceae</taxon>
        <taxon>Salmonella</taxon>
    </lineage>
</organism>
<reference key="1">
    <citation type="journal article" date="2001" name="Nature">
        <title>Complete genome sequence of a multiple drug resistant Salmonella enterica serovar Typhi CT18.</title>
        <authorList>
            <person name="Parkhill J."/>
            <person name="Dougan G."/>
            <person name="James K.D."/>
            <person name="Thomson N.R."/>
            <person name="Pickard D."/>
            <person name="Wain J."/>
            <person name="Churcher C.M."/>
            <person name="Mungall K.L."/>
            <person name="Bentley S.D."/>
            <person name="Holden M.T.G."/>
            <person name="Sebaihia M."/>
            <person name="Baker S."/>
            <person name="Basham D."/>
            <person name="Brooks K."/>
            <person name="Chillingworth T."/>
            <person name="Connerton P."/>
            <person name="Cronin A."/>
            <person name="Davis P."/>
            <person name="Davies R.M."/>
            <person name="Dowd L."/>
            <person name="White N."/>
            <person name="Farrar J."/>
            <person name="Feltwell T."/>
            <person name="Hamlin N."/>
            <person name="Haque A."/>
            <person name="Hien T.T."/>
            <person name="Holroyd S."/>
            <person name="Jagels K."/>
            <person name="Krogh A."/>
            <person name="Larsen T.S."/>
            <person name="Leather S."/>
            <person name="Moule S."/>
            <person name="O'Gaora P."/>
            <person name="Parry C."/>
            <person name="Quail M.A."/>
            <person name="Rutherford K.M."/>
            <person name="Simmonds M."/>
            <person name="Skelton J."/>
            <person name="Stevens K."/>
            <person name="Whitehead S."/>
            <person name="Barrell B.G."/>
        </authorList>
    </citation>
    <scope>NUCLEOTIDE SEQUENCE [LARGE SCALE GENOMIC DNA]</scope>
    <source>
        <strain>CT18</strain>
    </source>
</reference>
<reference key="2">
    <citation type="journal article" date="2003" name="J. Bacteriol.">
        <title>Comparative genomics of Salmonella enterica serovar Typhi strains Ty2 and CT18.</title>
        <authorList>
            <person name="Deng W."/>
            <person name="Liou S.-R."/>
            <person name="Plunkett G. III"/>
            <person name="Mayhew G.F."/>
            <person name="Rose D.J."/>
            <person name="Burland V."/>
            <person name="Kodoyianni V."/>
            <person name="Schwartz D.C."/>
            <person name="Blattner F.R."/>
        </authorList>
    </citation>
    <scope>NUCLEOTIDE SEQUENCE [LARGE SCALE GENOMIC DNA]</scope>
    <source>
        <strain>ATCC 700931 / Ty2</strain>
    </source>
</reference>
<gene>
    <name evidence="1" type="primary">wecA</name>
    <name type="synonym">rfe</name>
    <name type="ordered locus">STY3637</name>
    <name type="ordered locus">t3379</name>
</gene>
<accession>Q8Z386</accession>
<evidence type="ECO:0000255" key="1">
    <source>
        <dbReference type="HAMAP-Rule" id="MF_02030"/>
    </source>
</evidence>
<name>WECA_SALTI</name>
<feature type="chain" id="PRO_0000108944" description="Undecaprenyl-phosphate alpha-N-acetylglucosaminyl 1-phosphate transferase">
    <location>
        <begin position="1"/>
        <end position="367"/>
    </location>
</feature>
<feature type="transmembrane region" description="Helical" evidence="1">
    <location>
        <begin position="3"/>
        <end position="23"/>
    </location>
</feature>
<feature type="transmembrane region" description="Helical" evidence="1">
    <location>
        <begin position="45"/>
        <end position="65"/>
    </location>
</feature>
<feature type="transmembrane region" description="Helical" evidence="1">
    <location>
        <begin position="69"/>
        <end position="89"/>
    </location>
</feature>
<feature type="transmembrane region" description="Helical" evidence="1">
    <location>
        <begin position="129"/>
        <end position="149"/>
    </location>
</feature>
<feature type="transmembrane region" description="Helical" evidence="1">
    <location>
        <begin position="158"/>
        <end position="178"/>
    </location>
</feature>
<feature type="transmembrane region" description="Helical" evidence="1">
    <location>
        <begin position="187"/>
        <end position="207"/>
    </location>
</feature>
<feature type="transmembrane region" description="Helical" evidence="1">
    <location>
        <begin position="213"/>
        <end position="233"/>
    </location>
</feature>
<feature type="transmembrane region" description="Helical" evidence="1">
    <location>
        <begin position="242"/>
        <end position="262"/>
    </location>
</feature>
<feature type="transmembrane region" description="Helical" evidence="1">
    <location>
        <begin position="318"/>
        <end position="338"/>
    </location>
</feature>
<protein>
    <recommendedName>
        <fullName evidence="1">Undecaprenyl-phosphate alpha-N-acetylglucosaminyl 1-phosphate transferase</fullName>
        <ecNumber evidence="1">2.7.8.33</ecNumber>
    </recommendedName>
    <alternativeName>
        <fullName evidence="1">UDP-GlcNAc:undecaprenyl-phosphate GlcNAc-1-phosphate transferase</fullName>
    </alternativeName>
    <alternativeName>
        <fullName evidence="1">Undecaprenyl-phosphate GlcNAc-1-phosphate transferase</fullName>
    </alternativeName>
</protein>
<proteinExistence type="inferred from homology"/>